<feature type="chain" id="PRO_0000307713" description="Endophilin-B2">
    <location>
        <begin position="1"/>
        <end position="404"/>
    </location>
</feature>
<feature type="domain" description="BAR" evidence="5">
    <location>
        <begin position="24"/>
        <end position="291"/>
    </location>
</feature>
<feature type="domain" description="SH3" evidence="4">
    <location>
        <begin position="344"/>
        <end position="404"/>
    </location>
</feature>
<feature type="region of interest" description="Membrane-binding amphipathic helix" evidence="2">
    <location>
        <begin position="1"/>
        <end position="27"/>
    </location>
</feature>
<feature type="coiled-coil region" evidence="3">
    <location>
        <begin position="209"/>
        <end position="239"/>
    </location>
</feature>
<feature type="modified residue" description="N-acetylmethionine" evidence="1">
    <location>
        <position position="1"/>
    </location>
</feature>
<feature type="modified residue" description="Phosphoserine" evidence="1">
    <location>
        <position position="10"/>
    </location>
</feature>
<feature type="modified residue" description="Phosphoserine" evidence="8">
    <location>
        <position position="404"/>
    </location>
</feature>
<sequence length="404" mass="44853">MDFNMKKLASDAGIFFTRAVQFTEEKFGQAEKTELDAHFENLLARADSTKNWTERILRQTEVLLQPNPSARVEEFLYEKLDRKVPSRVTNGELLAQYMAEAASELGPNTPYGKTLMKVSEAEKRLGAAERDFIHTASLSFLTPLRNFLEGDWKTISKERRLLQNRRLDLDACKARLKKAKAAEAKATCEGDTVPDFQETRPRNYILSASASALWNDEVDKAEQELRAAQTEFDRQAEVTRLLLEGISSAHVNHLRCLHEFVKSQTTYYAQCYRHMLDLQKQLGSSQGAIFPGTFVGTTEPASPPLSSTSPTTTAATMPVVPTGAGLAPPEEAALCLEEVAPPASGTRKARVLYDYEAADSSELALLADELITVYSLPGMDPDWLIGERGNKKGKVPVTYLELLS</sequence>
<accession>Q5PPJ9</accession>
<organism>
    <name type="scientific">Rattus norvegicus</name>
    <name type="common">Rat</name>
    <dbReference type="NCBI Taxonomy" id="10116"/>
    <lineage>
        <taxon>Eukaryota</taxon>
        <taxon>Metazoa</taxon>
        <taxon>Chordata</taxon>
        <taxon>Craniata</taxon>
        <taxon>Vertebrata</taxon>
        <taxon>Euteleostomi</taxon>
        <taxon>Mammalia</taxon>
        <taxon>Eutheria</taxon>
        <taxon>Euarchontoglires</taxon>
        <taxon>Glires</taxon>
        <taxon>Rodentia</taxon>
        <taxon>Myomorpha</taxon>
        <taxon>Muroidea</taxon>
        <taxon>Muridae</taxon>
        <taxon>Murinae</taxon>
        <taxon>Rattus</taxon>
    </lineage>
</organism>
<protein>
    <recommendedName>
        <fullName>Endophilin-B2</fullName>
    </recommendedName>
    <alternativeName>
        <fullName>SH3 domain-containing GRB2-like protein B2</fullName>
    </alternativeName>
</protein>
<proteinExistence type="evidence at protein level"/>
<reference evidence="7" key="1">
    <citation type="journal article" date="2004" name="Genome Res.">
        <title>The status, quality, and expansion of the NIH full-length cDNA project: the Mammalian Gene Collection (MGC).</title>
        <authorList>
            <consortium name="The MGC Project Team"/>
        </authorList>
    </citation>
    <scope>NUCLEOTIDE SEQUENCE [LARGE SCALE MRNA]</scope>
    <source>
        <tissue evidence="7">Brain</tissue>
    </source>
</reference>
<reference key="2">
    <citation type="journal article" date="2012" name="Nat. Commun.">
        <title>Quantitative maps of protein phosphorylation sites across 14 different rat organs and tissues.</title>
        <authorList>
            <person name="Lundby A."/>
            <person name="Secher A."/>
            <person name="Lage K."/>
            <person name="Nordsborg N.B."/>
            <person name="Dmytriyev A."/>
            <person name="Lundby C."/>
            <person name="Olsen J.V."/>
        </authorList>
    </citation>
    <scope>PHOSPHORYLATION [LARGE SCALE ANALYSIS] AT SER-404</scope>
    <scope>IDENTIFICATION BY MASS SPECTROMETRY [LARGE SCALE ANALYSIS]</scope>
</reference>
<gene>
    <name evidence="7" type="primary">Sh3glb2</name>
</gene>
<comment type="subunit">
    <text evidence="1">Homodimer, and heterodimer with SH3GLB1.</text>
</comment>
<comment type="subcellular location">
    <subcellularLocation>
        <location evidence="1">Cytoplasm</location>
    </subcellularLocation>
</comment>
<comment type="similarity">
    <text evidence="3">Belongs to the endophilin family.</text>
</comment>
<comment type="sequence caution" evidence="6">
    <conflict type="frameshift">
        <sequence resource="EMBL-CDS" id="AAH87652"/>
    </conflict>
</comment>
<name>SHLB2_RAT</name>
<evidence type="ECO:0000250" key="1">
    <source>
        <dbReference type="UniProtKB" id="Q9NR46"/>
    </source>
</evidence>
<evidence type="ECO:0000250" key="2">
    <source>
        <dbReference type="UniProtKB" id="Q9Y371"/>
    </source>
</evidence>
<evidence type="ECO:0000255" key="3"/>
<evidence type="ECO:0000255" key="4">
    <source>
        <dbReference type="PROSITE-ProRule" id="PRU00192"/>
    </source>
</evidence>
<evidence type="ECO:0000255" key="5">
    <source>
        <dbReference type="PROSITE-ProRule" id="PRU00361"/>
    </source>
</evidence>
<evidence type="ECO:0000305" key="6"/>
<evidence type="ECO:0000312" key="7">
    <source>
        <dbReference type="EMBL" id="AAH87652.1"/>
    </source>
</evidence>
<evidence type="ECO:0007744" key="8">
    <source>
    </source>
</evidence>
<dbReference type="EMBL" id="BC087652">
    <property type="protein sequence ID" value="AAH87652.1"/>
    <property type="status" value="ALT_FRAME"/>
    <property type="molecule type" value="mRNA"/>
</dbReference>
<dbReference type="RefSeq" id="NP_001009692.1">
    <property type="nucleotide sequence ID" value="NM_001009692.1"/>
</dbReference>
<dbReference type="RefSeq" id="XP_006233880.1">
    <property type="nucleotide sequence ID" value="XM_006233818.3"/>
</dbReference>
<dbReference type="SMR" id="Q5PPJ9"/>
<dbReference type="BioGRID" id="260069">
    <property type="interactions" value="2"/>
</dbReference>
<dbReference type="FunCoup" id="Q5PPJ9">
    <property type="interactions" value="1792"/>
</dbReference>
<dbReference type="IntAct" id="Q5PPJ9">
    <property type="interactions" value="2"/>
</dbReference>
<dbReference type="MINT" id="Q5PPJ9"/>
<dbReference type="STRING" id="10116.ENSRNOP00000075076"/>
<dbReference type="GlyGen" id="Q5PPJ9">
    <property type="glycosylation" value="2 sites, 1 O-linked glycan (1 site)"/>
</dbReference>
<dbReference type="iPTMnet" id="Q5PPJ9"/>
<dbReference type="PhosphoSitePlus" id="Q5PPJ9"/>
<dbReference type="SwissPalm" id="Q5PPJ9"/>
<dbReference type="jPOST" id="Q5PPJ9"/>
<dbReference type="PaxDb" id="10116-ENSRNOP00000023527"/>
<dbReference type="UCSC" id="RGD:1305886">
    <property type="organism name" value="rat"/>
</dbReference>
<dbReference type="AGR" id="RGD:1305886"/>
<dbReference type="RGD" id="1305886">
    <property type="gene designation" value="Sh3glb2"/>
</dbReference>
<dbReference type="eggNOG" id="KOG3725">
    <property type="taxonomic scope" value="Eukaryota"/>
</dbReference>
<dbReference type="InParanoid" id="Q5PPJ9"/>
<dbReference type="OrthoDB" id="14167at2759"/>
<dbReference type="PhylomeDB" id="Q5PPJ9"/>
<dbReference type="PRO" id="PR:Q5PPJ9"/>
<dbReference type="Proteomes" id="UP000002494">
    <property type="component" value="Unplaced"/>
</dbReference>
<dbReference type="GO" id="GO:0005737">
    <property type="term" value="C:cytoplasm"/>
    <property type="evidence" value="ECO:0000266"/>
    <property type="project" value="RGD"/>
</dbReference>
<dbReference type="GO" id="GO:0098978">
    <property type="term" value="C:glutamatergic synapse"/>
    <property type="evidence" value="ECO:0000314"/>
    <property type="project" value="SynGO"/>
</dbReference>
<dbReference type="GO" id="GO:0016020">
    <property type="term" value="C:membrane"/>
    <property type="evidence" value="ECO:0000318"/>
    <property type="project" value="GO_Central"/>
</dbReference>
<dbReference type="GO" id="GO:0098843">
    <property type="term" value="C:postsynaptic endocytic zone"/>
    <property type="evidence" value="ECO:0000314"/>
    <property type="project" value="SynGO"/>
</dbReference>
<dbReference type="GO" id="GO:0042802">
    <property type="term" value="F:identical protein binding"/>
    <property type="evidence" value="ECO:0000266"/>
    <property type="project" value="RGD"/>
</dbReference>
<dbReference type="GO" id="GO:0061024">
    <property type="term" value="P:membrane organization"/>
    <property type="evidence" value="ECO:0000318"/>
    <property type="project" value="GO_Central"/>
</dbReference>
<dbReference type="GO" id="GO:0098884">
    <property type="term" value="P:postsynaptic neurotransmitter receptor internalization"/>
    <property type="evidence" value="ECO:0000314"/>
    <property type="project" value="SynGO"/>
</dbReference>
<dbReference type="CDD" id="cd07617">
    <property type="entry name" value="BAR_Endophilin_B2"/>
    <property type="match status" value="1"/>
</dbReference>
<dbReference type="CDD" id="cd11944">
    <property type="entry name" value="SH3_Endophilin_B2"/>
    <property type="match status" value="1"/>
</dbReference>
<dbReference type="FunFam" id="2.30.30.40:FF:000028">
    <property type="entry name" value="endophilin-B2 isoform X1"/>
    <property type="match status" value="1"/>
</dbReference>
<dbReference type="Gene3D" id="1.20.1270.60">
    <property type="entry name" value="Arfaptin homology (AH) domain/BAR domain"/>
    <property type="match status" value="1"/>
</dbReference>
<dbReference type="Gene3D" id="2.30.30.40">
    <property type="entry name" value="SH3 Domains"/>
    <property type="match status" value="1"/>
</dbReference>
<dbReference type="InterPro" id="IPR027267">
    <property type="entry name" value="AH/BAR_dom_sf"/>
</dbReference>
<dbReference type="InterPro" id="IPR004148">
    <property type="entry name" value="BAR_dom"/>
</dbReference>
<dbReference type="InterPro" id="IPR035640">
    <property type="entry name" value="Endophilin_B2_SH3"/>
</dbReference>
<dbReference type="InterPro" id="IPR050384">
    <property type="entry name" value="Endophilin_SH3RF"/>
</dbReference>
<dbReference type="InterPro" id="IPR036028">
    <property type="entry name" value="SH3-like_dom_sf"/>
</dbReference>
<dbReference type="InterPro" id="IPR001452">
    <property type="entry name" value="SH3_domain"/>
</dbReference>
<dbReference type="PANTHER" id="PTHR14167:SF68">
    <property type="entry name" value="DREBRIN-LIKE PROTEIN-RELATED"/>
    <property type="match status" value="1"/>
</dbReference>
<dbReference type="PANTHER" id="PTHR14167">
    <property type="entry name" value="SH3 DOMAIN-CONTAINING"/>
    <property type="match status" value="1"/>
</dbReference>
<dbReference type="Pfam" id="PF03114">
    <property type="entry name" value="BAR"/>
    <property type="match status" value="1"/>
</dbReference>
<dbReference type="Pfam" id="PF14604">
    <property type="entry name" value="SH3_9"/>
    <property type="match status" value="1"/>
</dbReference>
<dbReference type="SMART" id="SM00721">
    <property type="entry name" value="BAR"/>
    <property type="match status" value="1"/>
</dbReference>
<dbReference type="SMART" id="SM00326">
    <property type="entry name" value="SH3"/>
    <property type="match status" value="1"/>
</dbReference>
<dbReference type="SUPFAM" id="SSF103657">
    <property type="entry name" value="BAR/IMD domain-like"/>
    <property type="match status" value="1"/>
</dbReference>
<dbReference type="SUPFAM" id="SSF50044">
    <property type="entry name" value="SH3-domain"/>
    <property type="match status" value="1"/>
</dbReference>
<dbReference type="PROSITE" id="PS51021">
    <property type="entry name" value="BAR"/>
    <property type="match status" value="1"/>
</dbReference>
<dbReference type="PROSITE" id="PS50002">
    <property type="entry name" value="SH3"/>
    <property type="match status" value="1"/>
</dbReference>
<keyword id="KW-0007">Acetylation</keyword>
<keyword id="KW-0175">Coiled coil</keyword>
<keyword id="KW-0963">Cytoplasm</keyword>
<keyword id="KW-0597">Phosphoprotein</keyword>
<keyword id="KW-1185">Reference proteome</keyword>
<keyword id="KW-0728">SH3 domain</keyword>